<reference key="1">
    <citation type="journal article" date="2004" name="Genome Res.">
        <title>The status, quality, and expansion of the NIH full-length cDNA project: the Mammalian Gene Collection (MGC).</title>
        <authorList>
            <consortium name="The MGC Project Team"/>
        </authorList>
    </citation>
    <scope>NUCLEOTIDE SEQUENCE [LARGE SCALE MRNA]</scope>
    <source>
        <tissue>Testis</tissue>
    </source>
</reference>
<keyword id="KW-1185">Reference proteome</keyword>
<keyword id="KW-0949">S-adenosyl-L-methionine</keyword>
<keyword id="KW-0808">Transferase</keyword>
<keyword id="KW-0819">tRNA processing</keyword>
<feature type="chain" id="PRO_0000281839" description="tRNA wybutosine-synthesizing protein 2 homolog">
    <location>
        <begin position="1"/>
        <end position="437"/>
    </location>
</feature>
<feature type="region of interest" description="Disordered" evidence="3">
    <location>
        <begin position="331"/>
        <end position="374"/>
    </location>
</feature>
<feature type="compositionally biased region" description="Polar residues" evidence="3">
    <location>
        <begin position="331"/>
        <end position="344"/>
    </location>
</feature>
<feature type="binding site" evidence="2">
    <location>
        <position position="208"/>
    </location>
    <ligand>
        <name>S-adenosyl-L-methionine</name>
        <dbReference type="ChEBI" id="CHEBI:59789"/>
    </ligand>
</feature>
<feature type="binding site" evidence="2">
    <location>
        <position position="215"/>
    </location>
    <ligand>
        <name>S-adenosyl-L-methionine</name>
        <dbReference type="ChEBI" id="CHEBI:59789"/>
    </ligand>
</feature>
<feature type="binding site" evidence="2">
    <location>
        <position position="255"/>
    </location>
    <ligand>
        <name>S-adenosyl-L-methionine</name>
        <dbReference type="ChEBI" id="CHEBI:59789"/>
    </ligand>
</feature>
<feature type="binding site" evidence="2">
    <location>
        <begin position="283"/>
        <end position="284"/>
    </location>
    <ligand>
        <name>S-adenosyl-L-methionine</name>
        <dbReference type="ChEBI" id="CHEBI:59789"/>
    </ligand>
</feature>
<feature type="sequence conflict" description="In Ref. 1; AAH79303." evidence="4" ref="1">
    <original>W</original>
    <variation>C</variation>
    <location>
        <position position="384"/>
    </location>
</feature>
<dbReference type="EC" id="2.5.1.114"/>
<dbReference type="EMBL" id="BC079303">
    <property type="protein sequence ID" value="AAH79303.2"/>
    <property type="molecule type" value="mRNA"/>
</dbReference>
<dbReference type="EMBL" id="BC097456">
    <property type="protein sequence ID" value="AAH97456.2"/>
    <property type="molecule type" value="mRNA"/>
</dbReference>
<dbReference type="RefSeq" id="NP_001116448.1">
    <property type="nucleotide sequence ID" value="NM_001122976.2"/>
</dbReference>
<dbReference type="SMR" id="Q4V8B8"/>
<dbReference type="FunCoup" id="Q4V8B8">
    <property type="interactions" value="1183"/>
</dbReference>
<dbReference type="STRING" id="10116.ENSRNOP00000011874"/>
<dbReference type="PhosphoSitePlus" id="Q4V8B8"/>
<dbReference type="PaxDb" id="10116-ENSRNOP00000011874"/>
<dbReference type="Ensembl" id="ENSRNOT00000011876.6">
    <property type="protein sequence ID" value="ENSRNOP00000011874.5"/>
    <property type="gene ID" value="ENSRNOG00000008978.6"/>
</dbReference>
<dbReference type="GeneID" id="314999"/>
<dbReference type="KEGG" id="rno:314999"/>
<dbReference type="UCSC" id="RGD:1307127">
    <property type="organism name" value="rat"/>
</dbReference>
<dbReference type="AGR" id="RGD:1307127"/>
<dbReference type="CTD" id="55039"/>
<dbReference type="RGD" id="1307127">
    <property type="gene designation" value="Trmt12"/>
</dbReference>
<dbReference type="eggNOG" id="KOG1227">
    <property type="taxonomic scope" value="Eukaryota"/>
</dbReference>
<dbReference type="GeneTree" id="ENSGT00940000153304"/>
<dbReference type="HOGENOM" id="CLU_022610_1_0_1"/>
<dbReference type="InParanoid" id="Q4V8B8"/>
<dbReference type="OMA" id="EHSWVKH"/>
<dbReference type="OrthoDB" id="40984at9989"/>
<dbReference type="PhylomeDB" id="Q4V8B8"/>
<dbReference type="TreeFam" id="TF314137"/>
<dbReference type="UniPathway" id="UPA00375"/>
<dbReference type="PRO" id="PR:Q4V8B8"/>
<dbReference type="Proteomes" id="UP000002494">
    <property type="component" value="Chromosome 7"/>
</dbReference>
<dbReference type="Bgee" id="ENSRNOG00000008978">
    <property type="expression patterns" value="Expressed in skeletal muscle tissue and 19 other cell types or tissues"/>
</dbReference>
<dbReference type="GO" id="GO:0005737">
    <property type="term" value="C:cytoplasm"/>
    <property type="evidence" value="ECO:0000318"/>
    <property type="project" value="GO_Central"/>
</dbReference>
<dbReference type="GO" id="GO:0102522">
    <property type="term" value="F:tRNA 4-demethylwyosine alpha-amino-alpha-carboxypropyltransferase activity"/>
    <property type="evidence" value="ECO:0007669"/>
    <property type="project" value="UniProtKB-EC"/>
</dbReference>
<dbReference type="GO" id="GO:0008175">
    <property type="term" value="F:tRNA methyltransferase activity"/>
    <property type="evidence" value="ECO:0000318"/>
    <property type="project" value="GO_Central"/>
</dbReference>
<dbReference type="GO" id="GO:0030488">
    <property type="term" value="P:tRNA methylation"/>
    <property type="evidence" value="ECO:0000318"/>
    <property type="project" value="GO_Central"/>
</dbReference>
<dbReference type="GO" id="GO:0031591">
    <property type="term" value="P:wybutosine biosynthetic process"/>
    <property type="evidence" value="ECO:0000318"/>
    <property type="project" value="GO_Central"/>
</dbReference>
<dbReference type="CDD" id="cd02440">
    <property type="entry name" value="AdoMet_MTases"/>
    <property type="match status" value="1"/>
</dbReference>
<dbReference type="FunFam" id="3.30.300.110:FF:000002">
    <property type="entry name" value="tRNA wybutosine-synthesizing protein 2 homolog"/>
    <property type="match status" value="1"/>
</dbReference>
<dbReference type="FunFam" id="3.40.50.150:FF:000201">
    <property type="entry name" value="tRNA wybutosine-synthesizing protein 2 homolog"/>
    <property type="match status" value="1"/>
</dbReference>
<dbReference type="Gene3D" id="3.30.300.110">
    <property type="entry name" value="Met-10+ protein-like domains"/>
    <property type="match status" value="1"/>
</dbReference>
<dbReference type="Gene3D" id="3.40.50.150">
    <property type="entry name" value="Vaccinia Virus protein VP39"/>
    <property type="match status" value="1"/>
</dbReference>
<dbReference type="InterPro" id="IPR030382">
    <property type="entry name" value="MeTrfase_TRM5/TYW2"/>
</dbReference>
<dbReference type="InterPro" id="IPR029063">
    <property type="entry name" value="SAM-dependent_MTases_sf"/>
</dbReference>
<dbReference type="InterPro" id="IPR056743">
    <property type="entry name" value="TRM5-TYW2-like_MTfase"/>
</dbReference>
<dbReference type="InterPro" id="IPR056744">
    <property type="entry name" value="TRM5/TYW2-like_N"/>
</dbReference>
<dbReference type="InterPro" id="IPR056745">
    <property type="entry name" value="TYW2_N"/>
</dbReference>
<dbReference type="PANTHER" id="PTHR23245">
    <property type="entry name" value="TRNA METHYLTRANSFERASE"/>
    <property type="match status" value="1"/>
</dbReference>
<dbReference type="PANTHER" id="PTHR23245:SF25">
    <property type="entry name" value="TRNA WYBUTOSINE-SYNTHESIZING PROTEIN 2 HOMOLOG"/>
    <property type="match status" value="1"/>
</dbReference>
<dbReference type="Pfam" id="PF02475">
    <property type="entry name" value="TRM5-TYW2_MTfase"/>
    <property type="match status" value="1"/>
</dbReference>
<dbReference type="Pfam" id="PF25132">
    <property type="entry name" value="TYW2_N"/>
    <property type="match status" value="1"/>
</dbReference>
<dbReference type="Pfam" id="PF25133">
    <property type="entry name" value="TYW2_N_2"/>
    <property type="match status" value="1"/>
</dbReference>
<dbReference type="SUPFAM" id="SSF53335">
    <property type="entry name" value="S-adenosyl-L-methionine-dependent methyltransferases"/>
    <property type="match status" value="1"/>
</dbReference>
<dbReference type="PROSITE" id="PS51684">
    <property type="entry name" value="SAM_MT_TRM5_TYW2"/>
    <property type="match status" value="1"/>
</dbReference>
<proteinExistence type="evidence at transcript level"/>
<organism>
    <name type="scientific">Rattus norvegicus</name>
    <name type="common">Rat</name>
    <dbReference type="NCBI Taxonomy" id="10116"/>
    <lineage>
        <taxon>Eukaryota</taxon>
        <taxon>Metazoa</taxon>
        <taxon>Chordata</taxon>
        <taxon>Craniata</taxon>
        <taxon>Vertebrata</taxon>
        <taxon>Euteleostomi</taxon>
        <taxon>Mammalia</taxon>
        <taxon>Eutheria</taxon>
        <taxon>Euarchontoglires</taxon>
        <taxon>Glires</taxon>
        <taxon>Rodentia</taxon>
        <taxon>Myomorpha</taxon>
        <taxon>Muroidea</taxon>
        <taxon>Muridae</taxon>
        <taxon>Murinae</taxon>
        <taxon>Rattus</taxon>
    </lineage>
</organism>
<protein>
    <recommendedName>
        <fullName>tRNA wybutosine-synthesizing protein 2 homolog</fullName>
        <shortName>tRNA-yW-synthesizing protein 2</shortName>
        <ecNumber>2.5.1.114</ecNumber>
    </recommendedName>
    <alternativeName>
        <fullName>tRNA(Phe) (4-demethylwyosine(37)-C(7)) aminocarboxypropyltransferase</fullName>
    </alternativeName>
</protein>
<sequence>MERECEKSVVVAVVTEPRFTQRYRDYLEKQKLLDRQYRVEKLRDGTVALPVLAETLSEHHLQELKNRVAPGSTCKLTQLLDPLPSKKARVCSPAQRLCLEVRRWVEDRGVTWSTELEADLPRSWQRHGDLMLLSEDCFQATQWKRLEPELWETVASALGVQRLAKRGRVLPDGTRTPTVTLLLGDHGWVEHVDNGIRYKFDVTQCMFSFGNITEKLRVASLSCAGEVLVDLYAGIGYFTLPFLVHAGAAFVHACEWNPHAVVALRKNLEINGVADRCQIHFGDNRKLKLSNTADRVNLGLIPSSEEGWPIACQVLRKDVGGILHIHQNVESFSGKNPQPPGSSNMEKKHWPHPQKITTDKQGNRTTGSCMGEMSSASKPEWQRWAESAESQIASLLHQVHGKPWRTRILHVHPVKSYAPHVDHIVLDLECRPCPLVG</sequence>
<accession>Q4V8B8</accession>
<accession>Q6AXV3</accession>
<evidence type="ECO:0000250" key="1"/>
<evidence type="ECO:0000255" key="2">
    <source>
        <dbReference type="PROSITE-ProRule" id="PRU01021"/>
    </source>
</evidence>
<evidence type="ECO:0000256" key="3">
    <source>
        <dbReference type="SAM" id="MobiDB-lite"/>
    </source>
</evidence>
<evidence type="ECO:0000305" key="4"/>
<gene>
    <name type="primary">Trmt12</name>
    <name type="synonym">Tyw2</name>
</gene>
<name>TYW2_RAT</name>
<comment type="function">
    <text evidence="1">S-adenosyl-L-methionine-dependent transferase that acts as a component of the wybutosine biosynthesis pathway. Wybutosine is a hyper modified guanosine with a tricyclic base found at the 3'-position adjacent to the anticodon of eukaryotic phenylalanine tRNA. Catalyzes the transfer of the alpha-amino-alpha-carboxypropyl (acp) group from S-adenosyl-L-methionine to the C-7 position of 4-demethylwyosine (imG-14) to produce wybutosine-86 (By similarity).</text>
</comment>
<comment type="catalytic activity">
    <reaction>
        <text>4-demethylwyosine(37) in tRNA(Phe) + S-adenosyl-L-methionine = 4-demethyl-7-[(3S)-3-amino-3-carboxypropyl]wyosine(37) in tRNA(Phe) + S-methyl-5'-thioadenosine + H(+)</text>
        <dbReference type="Rhea" id="RHEA:36355"/>
        <dbReference type="Rhea" id="RHEA-COMP:10164"/>
        <dbReference type="Rhea" id="RHEA-COMP:10378"/>
        <dbReference type="ChEBI" id="CHEBI:15378"/>
        <dbReference type="ChEBI" id="CHEBI:17509"/>
        <dbReference type="ChEBI" id="CHEBI:59789"/>
        <dbReference type="ChEBI" id="CHEBI:64315"/>
        <dbReference type="ChEBI" id="CHEBI:73550"/>
        <dbReference type="EC" id="2.5.1.114"/>
    </reaction>
</comment>
<comment type="pathway">
    <text>tRNA modification; wybutosine-tRNA(Phe) biosynthesis.</text>
</comment>
<comment type="similarity">
    <text evidence="2">Belongs to the class I-like SAM-binding methyltransferase superfamily. TRM5/TYW2 family.</text>
</comment>